<protein>
    <recommendedName>
        <fullName evidence="1">Isoleucine--tRNA ligase</fullName>
        <ecNumber evidence="1">6.1.1.5</ecNumber>
    </recommendedName>
    <alternativeName>
        <fullName evidence="1">Isoleucyl-tRNA synthetase</fullName>
        <shortName evidence="1">IleRS</shortName>
    </alternativeName>
</protein>
<gene>
    <name evidence="1" type="primary">ileS</name>
    <name type="ordered locus">BceJ2315_26630</name>
    <name type="ORF">BCAL2724</name>
</gene>
<sequence length="945" mass="106014">MSNKKADSKPQAKYPVNLLDTPFPMRGDLPKREPQWVKEWEERGIYDKIRAASQGRPKFILHDGPPYANGDIHLGHAVNKILKDIVVKSRNMAGFDAPYVPGWDCHGMPIEIQIEKQFGKSLPAAEVMSKARAYATEQIEKQKVGFKRLGVLGDWANPYKTMNFVNEAEEIRALGKIIEKGYVYRGLKPVNWCFDCGSALAEAEVEYKDRTDPTIDVMFAFAEPEKTAQAFGLPALPRADGGIVIWTTTPWTIPANQALNLHPEIVYALVDTERGLLIIAEERVEACMSDFKLTGRIIATTPGVKLANLRFHHPLASAHPGYKRTAPVYLGDYVTTDTGTGVVHSSPAYGIEDFMSCKAHGMTDSDFINPVMGDGRYIESLPLFGGLSIWDANPKIVDALNAAGSLLRSEKYTHSYMHCWRHKTPIIYRATSQWFAGMDVTPRDGGKTLRETALEGVDATAFYPSWGKQRLFSMIANRPDWTLSRQRQWGVPMAFFVHKETGELHPRTLELLEEVAKRVEQSGIEAWQSLDPRELIGDDANLYEKNRDTLDVWFDSGTTHWHVLRGSHKDQLQFPADLYLEGSDQHRGWFHSSLLTASMIDGRAPYKGLLTHGFTVDGEGRKMSKSLGNGIDPHEVANRLGAEIIRLWIASTDYSGELAISEEILKRVTEGYRRIRNTLRFLLANLSDFDFAQHAVPVDEWLEIDRYAVAFSQQLQTELLGHYEKYEFHPVVAKLQTYCSEDLGGFYLDVLKDRLYTSAADSRARRSAQTALYHLTHGLLRVLAPFLSFTAEEAWKVFQPASDTIFTETYYAYPEVAGSAALIDKWALLRDVRGNVTKALEEARTANRIGSSLQAEVTVHASGARYDALTSLGDDLKFVLITSAATVVKVDDEAQESVDVAASKYQKCERCWHYREDVGAHAEHPTLCGRCFSNLFENGEIRSAA</sequence>
<feature type="chain" id="PRO_1000189137" description="Isoleucine--tRNA ligase">
    <location>
        <begin position="1"/>
        <end position="945"/>
    </location>
</feature>
<feature type="short sequence motif" description="'HIGH' region">
    <location>
        <begin position="66"/>
        <end position="76"/>
    </location>
</feature>
<feature type="short sequence motif" description="'KMSKS' region">
    <location>
        <begin position="622"/>
        <end position="626"/>
    </location>
</feature>
<feature type="binding site" evidence="1">
    <location>
        <position position="581"/>
    </location>
    <ligand>
        <name>L-isoleucyl-5'-AMP</name>
        <dbReference type="ChEBI" id="CHEBI:178002"/>
    </ligand>
</feature>
<feature type="binding site" evidence="1">
    <location>
        <position position="625"/>
    </location>
    <ligand>
        <name>ATP</name>
        <dbReference type="ChEBI" id="CHEBI:30616"/>
    </ligand>
</feature>
<feature type="binding site" evidence="1">
    <location>
        <position position="908"/>
    </location>
    <ligand>
        <name>Zn(2+)</name>
        <dbReference type="ChEBI" id="CHEBI:29105"/>
    </ligand>
</feature>
<feature type="binding site" evidence="1">
    <location>
        <position position="911"/>
    </location>
    <ligand>
        <name>Zn(2+)</name>
        <dbReference type="ChEBI" id="CHEBI:29105"/>
    </ligand>
</feature>
<feature type="binding site" evidence="1">
    <location>
        <position position="928"/>
    </location>
    <ligand>
        <name>Zn(2+)</name>
        <dbReference type="ChEBI" id="CHEBI:29105"/>
    </ligand>
</feature>
<feature type="binding site" evidence="1">
    <location>
        <position position="931"/>
    </location>
    <ligand>
        <name>Zn(2+)</name>
        <dbReference type="ChEBI" id="CHEBI:29105"/>
    </ligand>
</feature>
<dbReference type="EC" id="6.1.1.5" evidence="1"/>
<dbReference type="EMBL" id="AM747720">
    <property type="protein sequence ID" value="CAR53025.1"/>
    <property type="molecule type" value="Genomic_DNA"/>
</dbReference>
<dbReference type="RefSeq" id="WP_006488953.1">
    <property type="nucleotide sequence ID" value="NC_011000.1"/>
</dbReference>
<dbReference type="SMR" id="B4E8Z7"/>
<dbReference type="GeneID" id="56559100"/>
<dbReference type="KEGG" id="bcj:BCAL2724"/>
<dbReference type="eggNOG" id="COG0060">
    <property type="taxonomic scope" value="Bacteria"/>
</dbReference>
<dbReference type="HOGENOM" id="CLU_001493_7_1_4"/>
<dbReference type="BioCyc" id="BCEN216591:G1G1V-3017-MONOMER"/>
<dbReference type="Proteomes" id="UP000001035">
    <property type="component" value="Chromosome 1"/>
</dbReference>
<dbReference type="GO" id="GO:0005829">
    <property type="term" value="C:cytosol"/>
    <property type="evidence" value="ECO:0007669"/>
    <property type="project" value="TreeGrafter"/>
</dbReference>
<dbReference type="GO" id="GO:0002161">
    <property type="term" value="F:aminoacyl-tRNA deacylase activity"/>
    <property type="evidence" value="ECO:0007669"/>
    <property type="project" value="InterPro"/>
</dbReference>
<dbReference type="GO" id="GO:0005524">
    <property type="term" value="F:ATP binding"/>
    <property type="evidence" value="ECO:0007669"/>
    <property type="project" value="UniProtKB-UniRule"/>
</dbReference>
<dbReference type="GO" id="GO:0004822">
    <property type="term" value="F:isoleucine-tRNA ligase activity"/>
    <property type="evidence" value="ECO:0007669"/>
    <property type="project" value="UniProtKB-UniRule"/>
</dbReference>
<dbReference type="GO" id="GO:0000049">
    <property type="term" value="F:tRNA binding"/>
    <property type="evidence" value="ECO:0007669"/>
    <property type="project" value="InterPro"/>
</dbReference>
<dbReference type="GO" id="GO:0008270">
    <property type="term" value="F:zinc ion binding"/>
    <property type="evidence" value="ECO:0007669"/>
    <property type="project" value="UniProtKB-UniRule"/>
</dbReference>
<dbReference type="GO" id="GO:0006428">
    <property type="term" value="P:isoleucyl-tRNA aminoacylation"/>
    <property type="evidence" value="ECO:0007669"/>
    <property type="project" value="UniProtKB-UniRule"/>
</dbReference>
<dbReference type="CDD" id="cd07960">
    <property type="entry name" value="Anticodon_Ia_Ile_BEm"/>
    <property type="match status" value="1"/>
</dbReference>
<dbReference type="CDD" id="cd00818">
    <property type="entry name" value="IleRS_core"/>
    <property type="match status" value="1"/>
</dbReference>
<dbReference type="FunFam" id="1.10.730.20:FF:000001">
    <property type="entry name" value="Isoleucine--tRNA ligase"/>
    <property type="match status" value="1"/>
</dbReference>
<dbReference type="FunFam" id="3.40.50.620:FF:000042">
    <property type="entry name" value="Isoleucine--tRNA ligase"/>
    <property type="match status" value="1"/>
</dbReference>
<dbReference type="FunFam" id="3.40.50.620:FF:000048">
    <property type="entry name" value="Isoleucine--tRNA ligase"/>
    <property type="match status" value="1"/>
</dbReference>
<dbReference type="Gene3D" id="1.10.730.20">
    <property type="match status" value="1"/>
</dbReference>
<dbReference type="Gene3D" id="3.40.50.620">
    <property type="entry name" value="HUPs"/>
    <property type="match status" value="2"/>
</dbReference>
<dbReference type="Gene3D" id="3.90.740.10">
    <property type="entry name" value="Valyl/Leucyl/Isoleucyl-tRNA synthetase, editing domain"/>
    <property type="match status" value="1"/>
</dbReference>
<dbReference type="HAMAP" id="MF_02002">
    <property type="entry name" value="Ile_tRNA_synth_type1"/>
    <property type="match status" value="1"/>
</dbReference>
<dbReference type="InterPro" id="IPR001412">
    <property type="entry name" value="aa-tRNA-synth_I_CS"/>
</dbReference>
<dbReference type="InterPro" id="IPR002300">
    <property type="entry name" value="aa-tRNA-synth_Ia"/>
</dbReference>
<dbReference type="InterPro" id="IPR033708">
    <property type="entry name" value="Anticodon_Ile_BEm"/>
</dbReference>
<dbReference type="InterPro" id="IPR002301">
    <property type="entry name" value="Ile-tRNA-ligase"/>
</dbReference>
<dbReference type="InterPro" id="IPR023585">
    <property type="entry name" value="Ile-tRNA-ligase_type1"/>
</dbReference>
<dbReference type="InterPro" id="IPR050081">
    <property type="entry name" value="Ile-tRNA_ligase"/>
</dbReference>
<dbReference type="InterPro" id="IPR013155">
    <property type="entry name" value="M/V/L/I-tRNA-synth_anticd-bd"/>
</dbReference>
<dbReference type="InterPro" id="IPR014729">
    <property type="entry name" value="Rossmann-like_a/b/a_fold"/>
</dbReference>
<dbReference type="InterPro" id="IPR009080">
    <property type="entry name" value="tRNAsynth_Ia_anticodon-bd"/>
</dbReference>
<dbReference type="InterPro" id="IPR009008">
    <property type="entry name" value="Val/Leu/Ile-tRNA-synth_edit"/>
</dbReference>
<dbReference type="InterPro" id="IPR010663">
    <property type="entry name" value="Znf_FPG/IleRS"/>
</dbReference>
<dbReference type="NCBIfam" id="TIGR00392">
    <property type="entry name" value="ileS"/>
    <property type="match status" value="1"/>
</dbReference>
<dbReference type="PANTHER" id="PTHR42765:SF1">
    <property type="entry name" value="ISOLEUCINE--TRNA LIGASE, MITOCHONDRIAL"/>
    <property type="match status" value="1"/>
</dbReference>
<dbReference type="PANTHER" id="PTHR42765">
    <property type="entry name" value="SOLEUCYL-TRNA SYNTHETASE"/>
    <property type="match status" value="1"/>
</dbReference>
<dbReference type="Pfam" id="PF08264">
    <property type="entry name" value="Anticodon_1"/>
    <property type="match status" value="1"/>
</dbReference>
<dbReference type="Pfam" id="PF00133">
    <property type="entry name" value="tRNA-synt_1"/>
    <property type="match status" value="1"/>
</dbReference>
<dbReference type="Pfam" id="PF06827">
    <property type="entry name" value="zf-FPG_IleRS"/>
    <property type="match status" value="1"/>
</dbReference>
<dbReference type="PRINTS" id="PR00984">
    <property type="entry name" value="TRNASYNTHILE"/>
</dbReference>
<dbReference type="SUPFAM" id="SSF47323">
    <property type="entry name" value="Anticodon-binding domain of a subclass of class I aminoacyl-tRNA synthetases"/>
    <property type="match status" value="1"/>
</dbReference>
<dbReference type="SUPFAM" id="SSF52374">
    <property type="entry name" value="Nucleotidylyl transferase"/>
    <property type="match status" value="1"/>
</dbReference>
<dbReference type="SUPFAM" id="SSF50677">
    <property type="entry name" value="ValRS/IleRS/LeuRS editing domain"/>
    <property type="match status" value="1"/>
</dbReference>
<dbReference type="PROSITE" id="PS00178">
    <property type="entry name" value="AA_TRNA_LIGASE_I"/>
    <property type="match status" value="1"/>
</dbReference>
<comment type="function">
    <text evidence="1">Catalyzes the attachment of isoleucine to tRNA(Ile). As IleRS can inadvertently accommodate and process structurally similar amino acids such as valine, to avoid such errors it has two additional distinct tRNA(Ile)-dependent editing activities. One activity is designated as 'pretransfer' editing and involves the hydrolysis of activated Val-AMP. The other activity is designated 'posttransfer' editing and involves deacylation of mischarged Val-tRNA(Ile).</text>
</comment>
<comment type="catalytic activity">
    <reaction evidence="1">
        <text>tRNA(Ile) + L-isoleucine + ATP = L-isoleucyl-tRNA(Ile) + AMP + diphosphate</text>
        <dbReference type="Rhea" id="RHEA:11060"/>
        <dbReference type="Rhea" id="RHEA-COMP:9666"/>
        <dbReference type="Rhea" id="RHEA-COMP:9695"/>
        <dbReference type="ChEBI" id="CHEBI:30616"/>
        <dbReference type="ChEBI" id="CHEBI:33019"/>
        <dbReference type="ChEBI" id="CHEBI:58045"/>
        <dbReference type="ChEBI" id="CHEBI:78442"/>
        <dbReference type="ChEBI" id="CHEBI:78528"/>
        <dbReference type="ChEBI" id="CHEBI:456215"/>
        <dbReference type="EC" id="6.1.1.5"/>
    </reaction>
</comment>
<comment type="cofactor">
    <cofactor evidence="1">
        <name>Zn(2+)</name>
        <dbReference type="ChEBI" id="CHEBI:29105"/>
    </cofactor>
    <text evidence="1">Binds 1 zinc ion per subunit.</text>
</comment>
<comment type="subunit">
    <text evidence="1">Monomer.</text>
</comment>
<comment type="subcellular location">
    <subcellularLocation>
        <location evidence="1">Cytoplasm</location>
    </subcellularLocation>
</comment>
<comment type="domain">
    <text evidence="1">IleRS has two distinct active sites: one for aminoacylation and one for editing. The misactivated valine is translocated from the active site to the editing site, which sterically excludes the correctly activated isoleucine. The single editing site contains two valyl binding pockets, one specific for each substrate (Val-AMP or Val-tRNA(Ile)).</text>
</comment>
<comment type="similarity">
    <text evidence="1">Belongs to the class-I aminoacyl-tRNA synthetase family. IleS type 1 subfamily.</text>
</comment>
<evidence type="ECO:0000255" key="1">
    <source>
        <dbReference type="HAMAP-Rule" id="MF_02002"/>
    </source>
</evidence>
<name>SYI_BURCJ</name>
<proteinExistence type="inferred from homology"/>
<organism>
    <name type="scientific">Burkholderia cenocepacia (strain ATCC BAA-245 / DSM 16553 / LMG 16656 / NCTC 13227 / J2315 / CF5610)</name>
    <name type="common">Burkholderia cepacia (strain J2315)</name>
    <dbReference type="NCBI Taxonomy" id="216591"/>
    <lineage>
        <taxon>Bacteria</taxon>
        <taxon>Pseudomonadati</taxon>
        <taxon>Pseudomonadota</taxon>
        <taxon>Betaproteobacteria</taxon>
        <taxon>Burkholderiales</taxon>
        <taxon>Burkholderiaceae</taxon>
        <taxon>Burkholderia</taxon>
        <taxon>Burkholderia cepacia complex</taxon>
    </lineage>
</organism>
<accession>B4E8Z7</accession>
<reference key="1">
    <citation type="journal article" date="2009" name="J. Bacteriol.">
        <title>The genome of Burkholderia cenocepacia J2315, an epidemic pathogen of cystic fibrosis patients.</title>
        <authorList>
            <person name="Holden M.T."/>
            <person name="Seth-Smith H.M."/>
            <person name="Crossman L.C."/>
            <person name="Sebaihia M."/>
            <person name="Bentley S.D."/>
            <person name="Cerdeno-Tarraga A.M."/>
            <person name="Thomson N.R."/>
            <person name="Bason N."/>
            <person name="Quail M.A."/>
            <person name="Sharp S."/>
            <person name="Cherevach I."/>
            <person name="Churcher C."/>
            <person name="Goodhead I."/>
            <person name="Hauser H."/>
            <person name="Holroyd N."/>
            <person name="Mungall K."/>
            <person name="Scott P."/>
            <person name="Walker D."/>
            <person name="White B."/>
            <person name="Rose H."/>
            <person name="Iversen P."/>
            <person name="Mil-Homens D."/>
            <person name="Rocha E.P."/>
            <person name="Fialho A.M."/>
            <person name="Baldwin A."/>
            <person name="Dowson C."/>
            <person name="Barrell B.G."/>
            <person name="Govan J.R."/>
            <person name="Vandamme P."/>
            <person name="Hart C.A."/>
            <person name="Mahenthiralingam E."/>
            <person name="Parkhill J."/>
        </authorList>
    </citation>
    <scope>NUCLEOTIDE SEQUENCE [LARGE SCALE GENOMIC DNA]</scope>
    <source>
        <strain>ATCC BAA-245 / DSM 16553 / LMG 16656 / NCTC 13227 / J2315 / CF5610</strain>
    </source>
</reference>
<keyword id="KW-0030">Aminoacyl-tRNA synthetase</keyword>
<keyword id="KW-0067">ATP-binding</keyword>
<keyword id="KW-0963">Cytoplasm</keyword>
<keyword id="KW-0436">Ligase</keyword>
<keyword id="KW-0479">Metal-binding</keyword>
<keyword id="KW-0547">Nucleotide-binding</keyword>
<keyword id="KW-0648">Protein biosynthesis</keyword>
<keyword id="KW-0862">Zinc</keyword>